<accession>Q721K9</accession>
<dbReference type="EC" id="3.5.99.6" evidence="1"/>
<dbReference type="EMBL" id="AE017262">
    <property type="protein sequence ID" value="AAT03755.1"/>
    <property type="molecule type" value="Genomic_DNA"/>
</dbReference>
<dbReference type="RefSeq" id="WP_003727073.1">
    <property type="nucleotide sequence ID" value="NC_002973.6"/>
</dbReference>
<dbReference type="SMR" id="Q721K9"/>
<dbReference type="KEGG" id="lmf:LMOf2365_0977"/>
<dbReference type="HOGENOM" id="CLU_049611_1_0_9"/>
<dbReference type="UniPathway" id="UPA00629">
    <property type="reaction ID" value="UER00684"/>
</dbReference>
<dbReference type="GO" id="GO:0005737">
    <property type="term" value="C:cytoplasm"/>
    <property type="evidence" value="ECO:0007669"/>
    <property type="project" value="TreeGrafter"/>
</dbReference>
<dbReference type="GO" id="GO:0004342">
    <property type="term" value="F:glucosamine-6-phosphate deaminase activity"/>
    <property type="evidence" value="ECO:0007669"/>
    <property type="project" value="UniProtKB-UniRule"/>
</dbReference>
<dbReference type="GO" id="GO:0042802">
    <property type="term" value="F:identical protein binding"/>
    <property type="evidence" value="ECO:0007669"/>
    <property type="project" value="TreeGrafter"/>
</dbReference>
<dbReference type="GO" id="GO:0005975">
    <property type="term" value="P:carbohydrate metabolic process"/>
    <property type="evidence" value="ECO:0007669"/>
    <property type="project" value="InterPro"/>
</dbReference>
<dbReference type="GO" id="GO:0006043">
    <property type="term" value="P:glucosamine catabolic process"/>
    <property type="evidence" value="ECO:0007669"/>
    <property type="project" value="TreeGrafter"/>
</dbReference>
<dbReference type="GO" id="GO:0006046">
    <property type="term" value="P:N-acetylglucosamine catabolic process"/>
    <property type="evidence" value="ECO:0007669"/>
    <property type="project" value="TreeGrafter"/>
</dbReference>
<dbReference type="GO" id="GO:0019262">
    <property type="term" value="P:N-acetylneuraminate catabolic process"/>
    <property type="evidence" value="ECO:0007669"/>
    <property type="project" value="UniProtKB-UniRule"/>
</dbReference>
<dbReference type="CDD" id="cd01399">
    <property type="entry name" value="GlcN6P_deaminase"/>
    <property type="match status" value="1"/>
</dbReference>
<dbReference type="FunFam" id="3.40.50.1360:FF:000003">
    <property type="entry name" value="Glucosamine-6-phosphate deaminase"/>
    <property type="match status" value="1"/>
</dbReference>
<dbReference type="Gene3D" id="3.40.50.1360">
    <property type="match status" value="1"/>
</dbReference>
<dbReference type="HAMAP" id="MF_01241">
    <property type="entry name" value="GlcN6P_deamin"/>
    <property type="match status" value="1"/>
</dbReference>
<dbReference type="InterPro" id="IPR006148">
    <property type="entry name" value="Glc/Gal-6P_isomerase"/>
</dbReference>
<dbReference type="InterPro" id="IPR004547">
    <property type="entry name" value="Glucosamine6P_isomerase"/>
</dbReference>
<dbReference type="InterPro" id="IPR018321">
    <property type="entry name" value="Glucosamine6P_isomerase_CS"/>
</dbReference>
<dbReference type="InterPro" id="IPR037171">
    <property type="entry name" value="NagB/RpiA_transferase-like"/>
</dbReference>
<dbReference type="PANTHER" id="PTHR11280">
    <property type="entry name" value="GLUCOSAMINE-6-PHOSPHATE ISOMERASE"/>
    <property type="match status" value="1"/>
</dbReference>
<dbReference type="PANTHER" id="PTHR11280:SF5">
    <property type="entry name" value="GLUCOSAMINE-6-PHOSPHATE ISOMERASE"/>
    <property type="match status" value="1"/>
</dbReference>
<dbReference type="Pfam" id="PF01182">
    <property type="entry name" value="Glucosamine_iso"/>
    <property type="match status" value="1"/>
</dbReference>
<dbReference type="SUPFAM" id="SSF100950">
    <property type="entry name" value="NagB/RpiA/CoA transferase-like"/>
    <property type="match status" value="1"/>
</dbReference>
<dbReference type="PROSITE" id="PS01161">
    <property type="entry name" value="GLC_GALNAC_ISOMERASE"/>
    <property type="match status" value="1"/>
</dbReference>
<name>NAGB_LISMF</name>
<organism>
    <name type="scientific">Listeria monocytogenes serotype 4b (strain F2365)</name>
    <dbReference type="NCBI Taxonomy" id="265669"/>
    <lineage>
        <taxon>Bacteria</taxon>
        <taxon>Bacillati</taxon>
        <taxon>Bacillota</taxon>
        <taxon>Bacilli</taxon>
        <taxon>Bacillales</taxon>
        <taxon>Listeriaceae</taxon>
        <taxon>Listeria</taxon>
    </lineage>
</organism>
<feature type="chain" id="PRO_0000160153" description="Glucosamine-6-phosphate deaminase">
    <location>
        <begin position="1"/>
        <end position="234"/>
    </location>
</feature>
<feature type="active site" description="Proton acceptor; for enolization step" evidence="1">
    <location>
        <position position="63"/>
    </location>
</feature>
<feature type="active site" description="For ring-opening step" evidence="1">
    <location>
        <position position="129"/>
    </location>
</feature>
<feature type="active site" description="Proton acceptor; for ring-opening step" evidence="1">
    <location>
        <position position="131"/>
    </location>
</feature>
<feature type="active site" description="For ring-opening step" evidence="1">
    <location>
        <position position="136"/>
    </location>
</feature>
<protein>
    <recommendedName>
        <fullName evidence="1">Glucosamine-6-phosphate deaminase</fullName>
        <ecNumber evidence="1">3.5.99.6</ecNumber>
    </recommendedName>
    <alternativeName>
        <fullName evidence="1">GlcN6P deaminase</fullName>
        <shortName evidence="1">GNPDA</shortName>
    </alternativeName>
    <alternativeName>
        <fullName evidence="1">Glucosamine-6-phosphate isomerase</fullName>
    </alternativeName>
</protein>
<reference key="1">
    <citation type="journal article" date="2004" name="Nucleic Acids Res.">
        <title>Whole genome comparisons of serotype 4b and 1/2a strains of the food-borne pathogen Listeria monocytogenes reveal new insights into the core genome components of this species.</title>
        <authorList>
            <person name="Nelson K.E."/>
            <person name="Fouts D.E."/>
            <person name="Mongodin E.F."/>
            <person name="Ravel J."/>
            <person name="DeBoy R.T."/>
            <person name="Kolonay J.F."/>
            <person name="Rasko D.A."/>
            <person name="Angiuoli S.V."/>
            <person name="Gill S.R."/>
            <person name="Paulsen I.T."/>
            <person name="Peterson J.D."/>
            <person name="White O."/>
            <person name="Nelson W.C."/>
            <person name="Nierman W.C."/>
            <person name="Beanan M.J."/>
            <person name="Brinkac L.M."/>
            <person name="Daugherty S.C."/>
            <person name="Dodson R.J."/>
            <person name="Durkin A.S."/>
            <person name="Madupu R."/>
            <person name="Haft D.H."/>
            <person name="Selengut J."/>
            <person name="Van Aken S.E."/>
            <person name="Khouri H.M."/>
            <person name="Fedorova N."/>
            <person name="Forberger H.A."/>
            <person name="Tran B."/>
            <person name="Kathariou S."/>
            <person name="Wonderling L.D."/>
            <person name="Uhlich G.A."/>
            <person name="Bayles D.O."/>
            <person name="Luchansky J.B."/>
            <person name="Fraser C.M."/>
        </authorList>
    </citation>
    <scope>NUCLEOTIDE SEQUENCE [LARGE SCALE GENOMIC DNA]</scope>
    <source>
        <strain>F2365</strain>
    </source>
</reference>
<gene>
    <name evidence="1" type="primary">nagB</name>
    <name type="ordered locus">LMOf2365_0977</name>
</gene>
<comment type="function">
    <text evidence="1">Catalyzes the reversible isomerization-deamination of glucosamine 6-phosphate (GlcN6P) to form fructose 6-phosphate (Fru6P) and ammonium ion.</text>
</comment>
<comment type="catalytic activity">
    <reaction evidence="1">
        <text>alpha-D-glucosamine 6-phosphate + H2O = beta-D-fructose 6-phosphate + NH4(+)</text>
        <dbReference type="Rhea" id="RHEA:12172"/>
        <dbReference type="ChEBI" id="CHEBI:15377"/>
        <dbReference type="ChEBI" id="CHEBI:28938"/>
        <dbReference type="ChEBI" id="CHEBI:57634"/>
        <dbReference type="ChEBI" id="CHEBI:75989"/>
        <dbReference type="EC" id="3.5.99.6"/>
    </reaction>
</comment>
<comment type="pathway">
    <text evidence="1">Amino-sugar metabolism; N-acetylneuraminate degradation; D-fructose 6-phosphate from N-acetylneuraminate: step 5/5.</text>
</comment>
<comment type="similarity">
    <text evidence="1">Belongs to the glucosamine/galactosamine-6-phosphate isomerase family. NagB subfamily.</text>
</comment>
<sequence>MQLITTENKLAGSKKALEIIEKGITSGEVNTLGLATGSTPETLYAELVKSDVDTKNVTTTNLDEYVGLAANDPNSYHYYMNELLFSKKAFKESFLPNGEATDAEAECARYEEILSEHPIDIQVLGIGTNGHIGFNEPGTPFDSLTHKVVLTDSTREANKRFFEREEDVPTHAYSMGIKSIMNAKKIILLAFGENKAQAIKETIKGPVDVNCPASVLQNHPDVTVILDNEAASLL</sequence>
<keyword id="KW-0119">Carbohydrate metabolism</keyword>
<keyword id="KW-0378">Hydrolase</keyword>
<evidence type="ECO:0000255" key="1">
    <source>
        <dbReference type="HAMAP-Rule" id="MF_01241"/>
    </source>
</evidence>
<proteinExistence type="inferred from homology"/>